<gene>
    <name evidence="1" type="primary">atpA</name>
    <name type="ordered locus">SGO_1544</name>
</gene>
<keyword id="KW-0066">ATP synthesis</keyword>
<keyword id="KW-0067">ATP-binding</keyword>
<keyword id="KW-1003">Cell membrane</keyword>
<keyword id="KW-0139">CF(1)</keyword>
<keyword id="KW-0375">Hydrogen ion transport</keyword>
<keyword id="KW-0406">Ion transport</keyword>
<keyword id="KW-0472">Membrane</keyword>
<keyword id="KW-0547">Nucleotide-binding</keyword>
<keyword id="KW-1185">Reference proteome</keyword>
<keyword id="KW-1278">Translocase</keyword>
<keyword id="KW-0813">Transport</keyword>
<organism>
    <name type="scientific">Streptococcus gordonii (strain Challis / ATCC 35105 / BCRC 15272 / CH1 / DL1 / V288)</name>
    <dbReference type="NCBI Taxonomy" id="467705"/>
    <lineage>
        <taxon>Bacteria</taxon>
        <taxon>Bacillati</taxon>
        <taxon>Bacillota</taxon>
        <taxon>Bacilli</taxon>
        <taxon>Lactobacillales</taxon>
        <taxon>Streptococcaceae</taxon>
        <taxon>Streptococcus</taxon>
    </lineage>
</organism>
<proteinExistence type="inferred from homology"/>
<evidence type="ECO:0000255" key="1">
    <source>
        <dbReference type="HAMAP-Rule" id="MF_01346"/>
    </source>
</evidence>
<comment type="function">
    <text evidence="1">Produces ATP from ADP in the presence of a proton gradient across the membrane. The alpha chain is a regulatory subunit.</text>
</comment>
<comment type="catalytic activity">
    <reaction evidence="1">
        <text>ATP + H2O + 4 H(+)(in) = ADP + phosphate + 5 H(+)(out)</text>
        <dbReference type="Rhea" id="RHEA:57720"/>
        <dbReference type="ChEBI" id="CHEBI:15377"/>
        <dbReference type="ChEBI" id="CHEBI:15378"/>
        <dbReference type="ChEBI" id="CHEBI:30616"/>
        <dbReference type="ChEBI" id="CHEBI:43474"/>
        <dbReference type="ChEBI" id="CHEBI:456216"/>
        <dbReference type="EC" id="7.1.2.2"/>
    </reaction>
</comment>
<comment type="subunit">
    <text evidence="1">F-type ATPases have 2 components, CF(1) - the catalytic core - and CF(0) - the membrane proton channel. CF(1) has five subunits: alpha(3), beta(3), gamma(1), delta(1), epsilon(1). CF(0) has three main subunits: a(1), b(2) and c(9-12). The alpha and beta chains form an alternating ring which encloses part of the gamma chain. CF(1) is attached to CF(0) by a central stalk formed by the gamma and epsilon chains, while a peripheral stalk is formed by the delta and b chains.</text>
</comment>
<comment type="subcellular location">
    <subcellularLocation>
        <location evidence="1">Cell membrane</location>
        <topology evidence="1">Peripheral membrane protein</topology>
    </subcellularLocation>
</comment>
<comment type="similarity">
    <text evidence="1">Belongs to the ATPase alpha/beta chains family.</text>
</comment>
<name>ATPA_STRGC</name>
<sequence>MAINAQEISALIKQQIENFQPDFDVTETGVVTYVGDGIARAHGLDNAMSGELLVFENGSYGMAQNLESNDVGIIILGDFTDIREGDTIRRTGKIMEVPVGEALIGRVVDPLGRPVDGLGEIATDKTRPVETPAPGVMQRKSVSEPLQTGLKAIDALVPIGRGQRELIIGDRQTGKTTIAIDAILNQKGQDMICIYVAIGQKESTVRTQVETLRQYGALDYTIVVTASASQPSPLLYLAPYAGVAMAEEFMYNGKHVLIVYDDLSKQAVAYRELSLLLRRPPGREAFPGDVFYLHSRLLERSAKVSDELGGGSITALPFIETQAGDISAYIATNVISITDGQIFLSDGLFNGGVRPAIDAGSSVSRVGGSAQIKAMKKVAGTLRIDLASYRELEAFTKFGSDLDAATQAKLNRGRRTVEVLKQPVHKPLPVEKQVVILYALTHGFLDSVPVDDILRFEEELFAYFDAHQEGIYETIRTTKDLPSEEVLDAAITEFVNQSSFK</sequence>
<accession>A8AYG3</accession>
<feature type="chain" id="PRO_1000086902" description="ATP synthase subunit alpha">
    <location>
        <begin position="1"/>
        <end position="501"/>
    </location>
</feature>
<feature type="binding site" evidence="1">
    <location>
        <begin position="169"/>
        <end position="176"/>
    </location>
    <ligand>
        <name>ATP</name>
        <dbReference type="ChEBI" id="CHEBI:30616"/>
    </ligand>
</feature>
<feature type="site" description="Required for activity" evidence="1">
    <location>
        <position position="362"/>
    </location>
</feature>
<reference key="1">
    <citation type="journal article" date="2007" name="J. Bacteriol.">
        <title>Genome-wide transcriptional changes in Streptococcus gordonii in response to competence signaling peptide.</title>
        <authorList>
            <person name="Vickerman M.M."/>
            <person name="Iobst S."/>
            <person name="Jesionowski A.M."/>
            <person name="Gill S.R."/>
        </authorList>
    </citation>
    <scope>NUCLEOTIDE SEQUENCE [LARGE SCALE GENOMIC DNA]</scope>
    <source>
        <strain>Challis / ATCC 35105 / BCRC 15272 / CH1 / DL1 / V288</strain>
    </source>
</reference>
<dbReference type="EC" id="7.1.2.2" evidence="1"/>
<dbReference type="EMBL" id="CP000725">
    <property type="protein sequence ID" value="ABV10892.1"/>
    <property type="molecule type" value="Genomic_DNA"/>
</dbReference>
<dbReference type="RefSeq" id="WP_012130615.1">
    <property type="nucleotide sequence ID" value="NC_009785.1"/>
</dbReference>
<dbReference type="SMR" id="A8AYG3"/>
<dbReference type="STRING" id="467705.SGO_1544"/>
<dbReference type="KEGG" id="sgo:SGO_1544"/>
<dbReference type="eggNOG" id="COG0056">
    <property type="taxonomic scope" value="Bacteria"/>
</dbReference>
<dbReference type="HOGENOM" id="CLU_010091_2_1_9"/>
<dbReference type="Proteomes" id="UP000001131">
    <property type="component" value="Chromosome"/>
</dbReference>
<dbReference type="GO" id="GO:0005886">
    <property type="term" value="C:plasma membrane"/>
    <property type="evidence" value="ECO:0007669"/>
    <property type="project" value="UniProtKB-SubCell"/>
</dbReference>
<dbReference type="GO" id="GO:0045259">
    <property type="term" value="C:proton-transporting ATP synthase complex"/>
    <property type="evidence" value="ECO:0007669"/>
    <property type="project" value="UniProtKB-KW"/>
</dbReference>
<dbReference type="GO" id="GO:0043531">
    <property type="term" value="F:ADP binding"/>
    <property type="evidence" value="ECO:0007669"/>
    <property type="project" value="TreeGrafter"/>
</dbReference>
<dbReference type="GO" id="GO:0005524">
    <property type="term" value="F:ATP binding"/>
    <property type="evidence" value="ECO:0007669"/>
    <property type="project" value="UniProtKB-UniRule"/>
</dbReference>
<dbReference type="GO" id="GO:0046933">
    <property type="term" value="F:proton-transporting ATP synthase activity, rotational mechanism"/>
    <property type="evidence" value="ECO:0007669"/>
    <property type="project" value="UniProtKB-UniRule"/>
</dbReference>
<dbReference type="CDD" id="cd18113">
    <property type="entry name" value="ATP-synt_F1_alpha_C"/>
    <property type="match status" value="1"/>
</dbReference>
<dbReference type="CDD" id="cd18116">
    <property type="entry name" value="ATP-synt_F1_alpha_N"/>
    <property type="match status" value="1"/>
</dbReference>
<dbReference type="CDD" id="cd01132">
    <property type="entry name" value="F1-ATPase_alpha_CD"/>
    <property type="match status" value="1"/>
</dbReference>
<dbReference type="FunFam" id="1.20.150.20:FF:000001">
    <property type="entry name" value="ATP synthase subunit alpha"/>
    <property type="match status" value="1"/>
</dbReference>
<dbReference type="FunFam" id="2.40.30.20:FF:000001">
    <property type="entry name" value="ATP synthase subunit alpha"/>
    <property type="match status" value="1"/>
</dbReference>
<dbReference type="FunFam" id="3.40.50.300:FF:000002">
    <property type="entry name" value="ATP synthase subunit alpha"/>
    <property type="match status" value="1"/>
</dbReference>
<dbReference type="Gene3D" id="2.40.30.20">
    <property type="match status" value="1"/>
</dbReference>
<dbReference type="Gene3D" id="1.20.150.20">
    <property type="entry name" value="ATP synthase alpha/beta chain, C-terminal domain"/>
    <property type="match status" value="1"/>
</dbReference>
<dbReference type="Gene3D" id="3.40.50.300">
    <property type="entry name" value="P-loop containing nucleotide triphosphate hydrolases"/>
    <property type="match status" value="1"/>
</dbReference>
<dbReference type="HAMAP" id="MF_01346">
    <property type="entry name" value="ATP_synth_alpha_bact"/>
    <property type="match status" value="1"/>
</dbReference>
<dbReference type="InterPro" id="IPR023366">
    <property type="entry name" value="ATP_synth_asu-like_sf"/>
</dbReference>
<dbReference type="InterPro" id="IPR000793">
    <property type="entry name" value="ATP_synth_asu_C"/>
</dbReference>
<dbReference type="InterPro" id="IPR038376">
    <property type="entry name" value="ATP_synth_asu_C_sf"/>
</dbReference>
<dbReference type="InterPro" id="IPR033732">
    <property type="entry name" value="ATP_synth_F1_a_nt-bd_dom"/>
</dbReference>
<dbReference type="InterPro" id="IPR005294">
    <property type="entry name" value="ATP_synth_F1_asu"/>
</dbReference>
<dbReference type="InterPro" id="IPR004100">
    <property type="entry name" value="ATPase_F1/V1/A1_a/bsu_N"/>
</dbReference>
<dbReference type="InterPro" id="IPR036121">
    <property type="entry name" value="ATPase_F1/V1/A1_a/bsu_N_sf"/>
</dbReference>
<dbReference type="InterPro" id="IPR000194">
    <property type="entry name" value="ATPase_F1/V1/A1_a/bsu_nucl-bd"/>
</dbReference>
<dbReference type="InterPro" id="IPR027417">
    <property type="entry name" value="P-loop_NTPase"/>
</dbReference>
<dbReference type="NCBIfam" id="TIGR00962">
    <property type="entry name" value="atpA"/>
    <property type="match status" value="1"/>
</dbReference>
<dbReference type="NCBIfam" id="NF009884">
    <property type="entry name" value="PRK13343.1"/>
    <property type="match status" value="1"/>
</dbReference>
<dbReference type="PANTHER" id="PTHR48082">
    <property type="entry name" value="ATP SYNTHASE SUBUNIT ALPHA, MITOCHONDRIAL"/>
    <property type="match status" value="1"/>
</dbReference>
<dbReference type="PANTHER" id="PTHR48082:SF2">
    <property type="entry name" value="ATP SYNTHASE SUBUNIT ALPHA, MITOCHONDRIAL"/>
    <property type="match status" value="1"/>
</dbReference>
<dbReference type="Pfam" id="PF00006">
    <property type="entry name" value="ATP-synt_ab"/>
    <property type="match status" value="1"/>
</dbReference>
<dbReference type="Pfam" id="PF00306">
    <property type="entry name" value="ATP-synt_ab_C"/>
    <property type="match status" value="1"/>
</dbReference>
<dbReference type="Pfam" id="PF02874">
    <property type="entry name" value="ATP-synt_ab_N"/>
    <property type="match status" value="1"/>
</dbReference>
<dbReference type="PIRSF" id="PIRSF039088">
    <property type="entry name" value="F_ATPase_subunit_alpha"/>
    <property type="match status" value="1"/>
</dbReference>
<dbReference type="SUPFAM" id="SSF47917">
    <property type="entry name" value="C-terminal domain of alpha and beta subunits of F1 ATP synthase"/>
    <property type="match status" value="1"/>
</dbReference>
<dbReference type="SUPFAM" id="SSF50615">
    <property type="entry name" value="N-terminal domain of alpha and beta subunits of F1 ATP synthase"/>
    <property type="match status" value="1"/>
</dbReference>
<dbReference type="SUPFAM" id="SSF52540">
    <property type="entry name" value="P-loop containing nucleoside triphosphate hydrolases"/>
    <property type="match status" value="1"/>
</dbReference>
<protein>
    <recommendedName>
        <fullName evidence="1">ATP synthase subunit alpha</fullName>
        <ecNumber evidence="1">7.1.2.2</ecNumber>
    </recommendedName>
    <alternativeName>
        <fullName evidence="1">ATP synthase F1 sector subunit alpha</fullName>
    </alternativeName>
    <alternativeName>
        <fullName evidence="1">F-ATPase subunit alpha</fullName>
    </alternativeName>
</protein>